<organism>
    <name type="scientific">Aliivibrio fischeri (strain ATCC 700601 / ES114)</name>
    <name type="common">Vibrio fischeri</name>
    <dbReference type="NCBI Taxonomy" id="312309"/>
    <lineage>
        <taxon>Bacteria</taxon>
        <taxon>Pseudomonadati</taxon>
        <taxon>Pseudomonadota</taxon>
        <taxon>Gammaproteobacteria</taxon>
        <taxon>Vibrionales</taxon>
        <taxon>Vibrionaceae</taxon>
        <taxon>Aliivibrio</taxon>
    </lineage>
</organism>
<proteinExistence type="inferred from homology"/>
<keyword id="KW-0963">Cytoplasm</keyword>
<keyword id="KW-0413">Isomerase</keyword>
<keyword id="KW-0414">Isoprene biosynthesis</keyword>
<keyword id="KW-0460">Magnesium</keyword>
<keyword id="KW-0464">Manganese</keyword>
<keyword id="KW-0479">Metal-binding</keyword>
<keyword id="KW-1185">Reference proteome</keyword>
<reference key="1">
    <citation type="journal article" date="2005" name="Proc. Natl. Acad. Sci. U.S.A.">
        <title>Complete genome sequence of Vibrio fischeri: a symbiotic bacterium with pathogenic congeners.</title>
        <authorList>
            <person name="Ruby E.G."/>
            <person name="Urbanowski M."/>
            <person name="Campbell J."/>
            <person name="Dunn A."/>
            <person name="Faini M."/>
            <person name="Gunsalus R."/>
            <person name="Lostroh P."/>
            <person name="Lupp C."/>
            <person name="McCann J."/>
            <person name="Millikan D."/>
            <person name="Schaefer A."/>
            <person name="Stabb E."/>
            <person name="Stevens A."/>
            <person name="Visick K."/>
            <person name="Whistler C."/>
            <person name="Greenberg E.P."/>
        </authorList>
    </citation>
    <scope>NUCLEOTIDE SEQUENCE [LARGE SCALE GENOMIC DNA]</scope>
    <source>
        <strain>ATCC 700601 / ES114</strain>
    </source>
</reference>
<sequence length="181" mass="20902">MTEYVVLVNEQGDAIGTMEKLEAHEKGLLHLAFSVLLYRETDLGKEFLLQKRAECKYHSKNKWSNTCCSHPRVNENVEVAGTRRLNEEIGITGVLPEQFVNLGWFIYQAELENGLSEHEQDYILIANTPDVSFILNPEEVSDIQWWSEADIEKEMKANPDTFSVWFPTVYKKVLTHLQQVN</sequence>
<protein>
    <recommendedName>
        <fullName evidence="1">Isopentenyl-diphosphate Delta-isomerase</fullName>
        <shortName evidence="1">IPP isomerase</shortName>
        <ecNumber evidence="1">5.3.3.2</ecNumber>
    </recommendedName>
    <alternativeName>
        <fullName evidence="1">IPP:DMAPP isomerase</fullName>
    </alternativeName>
    <alternativeName>
        <fullName evidence="1">Isopentenyl pyrophosphate isomerase</fullName>
    </alternativeName>
</protein>
<comment type="function">
    <text evidence="1">Catalyzes the 1,3-allylic rearrangement of the homoallylic substrate isopentenyl (IPP) to its highly electrophilic allylic isomer, dimethylallyl diphosphate (DMAPP).</text>
</comment>
<comment type="catalytic activity">
    <reaction evidence="1">
        <text>isopentenyl diphosphate = dimethylallyl diphosphate</text>
        <dbReference type="Rhea" id="RHEA:23284"/>
        <dbReference type="ChEBI" id="CHEBI:57623"/>
        <dbReference type="ChEBI" id="CHEBI:128769"/>
        <dbReference type="EC" id="5.3.3.2"/>
    </reaction>
</comment>
<comment type="cofactor">
    <cofactor evidence="1">
        <name>Mg(2+)</name>
        <dbReference type="ChEBI" id="CHEBI:18420"/>
    </cofactor>
    <text evidence="1">Binds 1 Mg(2+) ion per subunit. The magnesium ion binds only when substrate is bound.</text>
</comment>
<comment type="cofactor">
    <cofactor evidence="1">
        <name>Mn(2+)</name>
        <dbReference type="ChEBI" id="CHEBI:29035"/>
    </cofactor>
    <text evidence="1">Binds 1 Mn(2+) ion per subunit.</text>
</comment>
<comment type="pathway">
    <text evidence="1">Isoprenoid biosynthesis; dimethylallyl diphosphate biosynthesis; dimethylallyl diphosphate from isopentenyl diphosphate: step 1/1.</text>
</comment>
<comment type="subcellular location">
    <subcellularLocation>
        <location evidence="1">Cytoplasm</location>
    </subcellularLocation>
</comment>
<comment type="similarity">
    <text evidence="1">Belongs to the IPP isomerase type 1 family.</text>
</comment>
<dbReference type="EC" id="5.3.3.2" evidence="1"/>
<dbReference type="EMBL" id="CP000020">
    <property type="protein sequence ID" value="AAW84898.1"/>
    <property type="molecule type" value="Genomic_DNA"/>
</dbReference>
<dbReference type="RefSeq" id="WP_011261194.1">
    <property type="nucleotide sequence ID" value="NC_006840.2"/>
</dbReference>
<dbReference type="RefSeq" id="YP_203786.1">
    <property type="nucleotide sequence ID" value="NC_006840.2"/>
</dbReference>
<dbReference type="SMR" id="Q5E7U8"/>
<dbReference type="STRING" id="312309.VF_0403"/>
<dbReference type="EnsemblBacteria" id="AAW84898">
    <property type="protein sequence ID" value="AAW84898"/>
    <property type="gene ID" value="VF_0403"/>
</dbReference>
<dbReference type="GeneID" id="54163030"/>
<dbReference type="KEGG" id="vfi:VF_0403"/>
<dbReference type="PATRIC" id="fig|312309.11.peg.393"/>
<dbReference type="eggNOG" id="COG1443">
    <property type="taxonomic scope" value="Bacteria"/>
</dbReference>
<dbReference type="HOGENOM" id="CLU_060552_2_1_6"/>
<dbReference type="OrthoDB" id="9809458at2"/>
<dbReference type="UniPathway" id="UPA00059">
    <property type="reaction ID" value="UER00104"/>
</dbReference>
<dbReference type="Proteomes" id="UP000000537">
    <property type="component" value="Chromosome I"/>
</dbReference>
<dbReference type="GO" id="GO:0005737">
    <property type="term" value="C:cytoplasm"/>
    <property type="evidence" value="ECO:0007669"/>
    <property type="project" value="UniProtKB-SubCell"/>
</dbReference>
<dbReference type="GO" id="GO:0004452">
    <property type="term" value="F:isopentenyl-diphosphate delta-isomerase activity"/>
    <property type="evidence" value="ECO:0007669"/>
    <property type="project" value="UniProtKB-UniRule"/>
</dbReference>
<dbReference type="GO" id="GO:0046872">
    <property type="term" value="F:metal ion binding"/>
    <property type="evidence" value="ECO:0007669"/>
    <property type="project" value="UniProtKB-KW"/>
</dbReference>
<dbReference type="GO" id="GO:0050992">
    <property type="term" value="P:dimethylallyl diphosphate biosynthetic process"/>
    <property type="evidence" value="ECO:0007669"/>
    <property type="project" value="UniProtKB-UniRule"/>
</dbReference>
<dbReference type="GO" id="GO:0009240">
    <property type="term" value="P:isopentenyl diphosphate biosynthetic process"/>
    <property type="evidence" value="ECO:0007669"/>
    <property type="project" value="TreeGrafter"/>
</dbReference>
<dbReference type="CDD" id="cd02885">
    <property type="entry name" value="NUDIX_IPP_Isomerase"/>
    <property type="match status" value="1"/>
</dbReference>
<dbReference type="Gene3D" id="3.90.79.10">
    <property type="entry name" value="Nucleoside Triphosphate Pyrophosphohydrolase"/>
    <property type="match status" value="1"/>
</dbReference>
<dbReference type="HAMAP" id="MF_00202">
    <property type="entry name" value="Idi"/>
    <property type="match status" value="1"/>
</dbReference>
<dbReference type="InterPro" id="IPR056375">
    <property type="entry name" value="Idi_bact"/>
</dbReference>
<dbReference type="InterPro" id="IPR011876">
    <property type="entry name" value="IsopentenylPP_isomerase_typ1"/>
</dbReference>
<dbReference type="InterPro" id="IPR015797">
    <property type="entry name" value="NUDIX_hydrolase-like_dom_sf"/>
</dbReference>
<dbReference type="InterPro" id="IPR000086">
    <property type="entry name" value="NUDIX_hydrolase_dom"/>
</dbReference>
<dbReference type="NCBIfam" id="NF002995">
    <property type="entry name" value="PRK03759.1"/>
    <property type="match status" value="1"/>
</dbReference>
<dbReference type="PANTHER" id="PTHR10885">
    <property type="entry name" value="ISOPENTENYL-DIPHOSPHATE DELTA-ISOMERASE"/>
    <property type="match status" value="1"/>
</dbReference>
<dbReference type="PANTHER" id="PTHR10885:SF0">
    <property type="entry name" value="ISOPENTENYL-DIPHOSPHATE DELTA-ISOMERASE"/>
    <property type="match status" value="1"/>
</dbReference>
<dbReference type="Pfam" id="PF00293">
    <property type="entry name" value="NUDIX"/>
    <property type="match status" value="1"/>
</dbReference>
<dbReference type="PIRSF" id="PIRSF018427">
    <property type="entry name" value="Isopntndiph_ism"/>
    <property type="match status" value="1"/>
</dbReference>
<dbReference type="SUPFAM" id="SSF55811">
    <property type="entry name" value="Nudix"/>
    <property type="match status" value="1"/>
</dbReference>
<dbReference type="PROSITE" id="PS51462">
    <property type="entry name" value="NUDIX"/>
    <property type="match status" value="1"/>
</dbReference>
<feature type="chain" id="PRO_0000205270" description="Isopentenyl-diphosphate Delta-isomerase">
    <location>
        <begin position="1"/>
        <end position="181"/>
    </location>
</feature>
<feature type="domain" description="Nudix hydrolase">
    <location>
        <begin position="28"/>
        <end position="168"/>
    </location>
</feature>
<feature type="active site" evidence="1">
    <location>
        <position position="68"/>
    </location>
</feature>
<feature type="active site" evidence="1">
    <location>
        <position position="119"/>
    </location>
</feature>
<feature type="binding site" evidence="1">
    <location>
        <position position="24"/>
    </location>
    <ligand>
        <name>Mn(2+)</name>
        <dbReference type="ChEBI" id="CHEBI:29035"/>
    </ligand>
</feature>
<feature type="binding site" evidence="1">
    <location>
        <position position="30"/>
    </location>
    <ligand>
        <name>Mn(2+)</name>
        <dbReference type="ChEBI" id="CHEBI:29035"/>
    </ligand>
</feature>
<feature type="binding site" evidence="1">
    <location>
        <position position="68"/>
    </location>
    <ligand>
        <name>Mg(2+)</name>
        <dbReference type="ChEBI" id="CHEBI:18420"/>
    </ligand>
</feature>
<feature type="binding site" evidence="1">
    <location>
        <position position="70"/>
    </location>
    <ligand>
        <name>Mn(2+)</name>
        <dbReference type="ChEBI" id="CHEBI:29035"/>
    </ligand>
</feature>
<feature type="binding site" evidence="1">
    <location>
        <position position="88"/>
    </location>
    <ligand>
        <name>Mg(2+)</name>
        <dbReference type="ChEBI" id="CHEBI:18420"/>
    </ligand>
</feature>
<feature type="binding site" evidence="1">
    <location>
        <position position="117"/>
    </location>
    <ligand>
        <name>Mn(2+)</name>
        <dbReference type="ChEBI" id="CHEBI:29035"/>
    </ligand>
</feature>
<feature type="binding site" evidence="1">
    <location>
        <position position="119"/>
    </location>
    <ligand>
        <name>Mn(2+)</name>
        <dbReference type="ChEBI" id="CHEBI:29035"/>
    </ligand>
</feature>
<accession>Q5E7U8</accession>
<evidence type="ECO:0000255" key="1">
    <source>
        <dbReference type="HAMAP-Rule" id="MF_00202"/>
    </source>
</evidence>
<gene>
    <name evidence="1" type="primary">idi</name>
    <name type="ordered locus">VF_0403</name>
</gene>
<name>IDI_ALIF1</name>